<evidence type="ECO:0000250" key="1"/>
<evidence type="ECO:0000250" key="2">
    <source>
        <dbReference type="UniProtKB" id="P00157"/>
    </source>
</evidence>
<evidence type="ECO:0000250" key="3">
    <source>
        <dbReference type="UniProtKB" id="P00163"/>
    </source>
</evidence>
<evidence type="ECO:0000255" key="4">
    <source>
        <dbReference type="PROSITE-ProRule" id="PRU00967"/>
    </source>
</evidence>
<evidence type="ECO:0000255" key="5">
    <source>
        <dbReference type="PROSITE-ProRule" id="PRU00968"/>
    </source>
</evidence>
<feature type="chain" id="PRO_0000061129" description="Cytochrome b">
    <location>
        <begin position="1"/>
        <end position="379"/>
    </location>
</feature>
<feature type="transmembrane region" description="Helical" evidence="2">
    <location>
        <begin position="34"/>
        <end position="54"/>
    </location>
</feature>
<feature type="transmembrane region" description="Helical" evidence="2">
    <location>
        <begin position="78"/>
        <end position="99"/>
    </location>
</feature>
<feature type="transmembrane region" description="Helical" evidence="2">
    <location>
        <begin position="114"/>
        <end position="134"/>
    </location>
</feature>
<feature type="transmembrane region" description="Helical" evidence="2">
    <location>
        <begin position="179"/>
        <end position="199"/>
    </location>
</feature>
<feature type="transmembrane region" description="Helical" evidence="2">
    <location>
        <begin position="227"/>
        <end position="247"/>
    </location>
</feature>
<feature type="transmembrane region" description="Helical" evidence="2">
    <location>
        <begin position="289"/>
        <end position="309"/>
    </location>
</feature>
<feature type="transmembrane region" description="Helical" evidence="2">
    <location>
        <begin position="321"/>
        <end position="341"/>
    </location>
</feature>
<feature type="transmembrane region" description="Helical" evidence="2">
    <location>
        <begin position="348"/>
        <end position="368"/>
    </location>
</feature>
<feature type="binding site" description="axial binding residue" evidence="2">
    <location>
        <position position="84"/>
    </location>
    <ligand>
        <name>heme b</name>
        <dbReference type="ChEBI" id="CHEBI:60344"/>
        <label>b562</label>
    </ligand>
    <ligandPart>
        <name>Fe</name>
        <dbReference type="ChEBI" id="CHEBI:18248"/>
    </ligandPart>
</feature>
<feature type="binding site" description="axial binding residue" evidence="2">
    <location>
        <position position="98"/>
    </location>
    <ligand>
        <name>heme b</name>
        <dbReference type="ChEBI" id="CHEBI:60344"/>
        <label>b566</label>
    </ligand>
    <ligandPart>
        <name>Fe</name>
        <dbReference type="ChEBI" id="CHEBI:18248"/>
    </ligandPart>
</feature>
<feature type="binding site" description="axial binding residue" evidence="2">
    <location>
        <position position="183"/>
    </location>
    <ligand>
        <name>heme b</name>
        <dbReference type="ChEBI" id="CHEBI:60344"/>
        <label>b562</label>
    </ligand>
    <ligandPart>
        <name>Fe</name>
        <dbReference type="ChEBI" id="CHEBI:18248"/>
    </ligandPart>
</feature>
<feature type="binding site" description="axial binding residue" evidence="2">
    <location>
        <position position="197"/>
    </location>
    <ligand>
        <name>heme b</name>
        <dbReference type="ChEBI" id="CHEBI:60344"/>
        <label>b566</label>
    </ligand>
    <ligandPart>
        <name>Fe</name>
        <dbReference type="ChEBI" id="CHEBI:18248"/>
    </ligandPart>
</feature>
<feature type="binding site" evidence="2">
    <location>
        <position position="202"/>
    </location>
    <ligand>
        <name>a ubiquinone</name>
        <dbReference type="ChEBI" id="CHEBI:16389"/>
    </ligand>
</feature>
<keyword id="KW-0249">Electron transport</keyword>
<keyword id="KW-0349">Heme</keyword>
<keyword id="KW-0408">Iron</keyword>
<keyword id="KW-0472">Membrane</keyword>
<keyword id="KW-0479">Metal-binding</keyword>
<keyword id="KW-0496">Mitochondrion</keyword>
<keyword id="KW-0999">Mitochondrion inner membrane</keyword>
<keyword id="KW-0679">Respiratory chain</keyword>
<keyword id="KW-0812">Transmembrane</keyword>
<keyword id="KW-1133">Transmembrane helix</keyword>
<keyword id="KW-0813">Transport</keyword>
<keyword id="KW-0830">Ubiquinone</keyword>
<sequence length="379" mass="43854">MNKPLRIKHPMIKIINNSLNDLPAPTNISMWWNLGSLLGMCLMIQIVTGLFLTMHYTPNIEMAFSSVVHICRDVNNGWLIRTLHANGASMFFICMYLHVGRGIYYGSYMYMNTWMTGTIILFLVMATAFMGYVLPWGQMSFWGATVITNLLSAIPYIGTDIVQWVWGGFAVDNATLNRFYTFHFVLPFIVMAMVMIHLFFLHQTGSNNPIGLNSNIDKIPFHPYFTYKDMITFIILMMILIMLCLIDPYMLGDPDNFVPANPLVTPIHIQPEWYFLFAYAILRSIPNKLGGVIALVMSISILMIMPFYNKTKFRGNQFYPMNQIMFWIMVIVICLLTWIGKRPVEEPYIMTGQILTIIYFSYFLFNVHIAKMWDTLIKT</sequence>
<name>CYB_LOCMI</name>
<proteinExistence type="inferred from homology"/>
<reference key="1">
    <citation type="journal article" date="1994" name="Curr. Genet.">
        <title>The genes for cytochrome b, ND 4L, ND6 and two tRNAs from the mitochondrial genome of the locust, Locusta migratoria.</title>
        <authorList>
            <person name="Rippe R.M."/>
            <person name="Gellissen G."/>
        </authorList>
    </citation>
    <scope>NUCLEOTIDE SEQUENCE [GENOMIC DNA]</scope>
</reference>
<reference key="2">
    <citation type="journal article" date="1995" name="J. Mol. Evol.">
        <title>The sequence, organization, and evolution of the Locusta migratoria mitochondrial genome.</title>
        <authorList>
            <person name="Flook P.K."/>
            <person name="Rowell C.H.F."/>
            <person name="Gellissen G."/>
        </authorList>
    </citation>
    <scope>NUCLEOTIDE SEQUENCE [GENOMIC DNA]</scope>
</reference>
<geneLocation type="mitochondrion"/>
<protein>
    <recommendedName>
        <fullName>Cytochrome b</fullName>
    </recommendedName>
    <alternativeName>
        <fullName>Complex III subunit 3</fullName>
    </alternativeName>
    <alternativeName>
        <fullName>Complex III subunit III</fullName>
    </alternativeName>
    <alternativeName>
        <fullName>Cytochrome b-c1 complex subunit 3</fullName>
    </alternativeName>
    <alternativeName>
        <fullName>Ubiquinol-cytochrome-c reductase complex cytochrome b subunit</fullName>
    </alternativeName>
</protein>
<comment type="function">
    <text evidence="2">Component of the ubiquinol-cytochrome c reductase complex (complex III or cytochrome b-c1 complex) that is part of the mitochondrial respiratory chain. The b-c1 complex mediates electron transfer from ubiquinol to cytochrome c. Contributes to the generation of a proton gradient across the mitochondrial membrane that is then used for ATP synthesis.</text>
</comment>
<comment type="cofactor">
    <cofactor evidence="2">
        <name>heme b</name>
        <dbReference type="ChEBI" id="CHEBI:60344"/>
    </cofactor>
    <text evidence="2">Binds 2 heme b groups non-covalently.</text>
</comment>
<comment type="subunit">
    <text evidence="2">The main subunits of complex b-c1 are: cytochrome b, cytochrome c1 and the Rieske protein.</text>
</comment>
<comment type="subcellular location">
    <subcellularLocation>
        <location evidence="3">Mitochondrion inner membrane</location>
        <topology evidence="3">Multi-pass membrane protein</topology>
    </subcellularLocation>
</comment>
<comment type="miscellaneous">
    <text evidence="1">Heme 1 (or BL or b562) is low-potential and absorbs at about 562 nm, and heme 2 (or BH or b566) is high-potential and absorbs at about 566 nm.</text>
</comment>
<comment type="similarity">
    <text evidence="4 5">Belongs to the cytochrome b family.</text>
</comment>
<comment type="caution">
    <text evidence="2">The full-length protein contains only eight transmembrane helices, not nine as predicted by bioinformatics tools.</text>
</comment>
<gene>
    <name type="primary">MT-CYB</name>
    <name type="synonym">COB</name>
    <name type="synonym">CYTB</name>
    <name type="synonym">MTCYB</name>
</gene>
<dbReference type="EMBL" id="X80245">
    <property type="protein sequence ID" value="CAA56537.1"/>
    <property type="molecule type" value="Genomic_DNA"/>
</dbReference>
<dbReference type="PIR" id="S40619">
    <property type="entry name" value="S40619"/>
</dbReference>
<dbReference type="RefSeq" id="NP_007301.1">
    <property type="nucleotide sequence ID" value="NC_001712.1"/>
</dbReference>
<dbReference type="SMR" id="Q36427"/>
<dbReference type="GeneID" id="807959"/>
<dbReference type="CTD" id="4519"/>
<dbReference type="GO" id="GO:0005743">
    <property type="term" value="C:mitochondrial inner membrane"/>
    <property type="evidence" value="ECO:0007669"/>
    <property type="project" value="UniProtKB-SubCell"/>
</dbReference>
<dbReference type="GO" id="GO:0045275">
    <property type="term" value="C:respiratory chain complex III"/>
    <property type="evidence" value="ECO:0007669"/>
    <property type="project" value="InterPro"/>
</dbReference>
<dbReference type="GO" id="GO:0046872">
    <property type="term" value="F:metal ion binding"/>
    <property type="evidence" value="ECO:0007669"/>
    <property type="project" value="UniProtKB-KW"/>
</dbReference>
<dbReference type="GO" id="GO:0008121">
    <property type="term" value="F:ubiquinol-cytochrome-c reductase activity"/>
    <property type="evidence" value="ECO:0007669"/>
    <property type="project" value="InterPro"/>
</dbReference>
<dbReference type="GO" id="GO:0006122">
    <property type="term" value="P:mitochondrial electron transport, ubiquinol to cytochrome c"/>
    <property type="evidence" value="ECO:0007669"/>
    <property type="project" value="TreeGrafter"/>
</dbReference>
<dbReference type="CDD" id="cd00290">
    <property type="entry name" value="cytochrome_b_C"/>
    <property type="match status" value="1"/>
</dbReference>
<dbReference type="CDD" id="cd00284">
    <property type="entry name" value="Cytochrome_b_N"/>
    <property type="match status" value="1"/>
</dbReference>
<dbReference type="FunFam" id="1.20.810.10:FF:000002">
    <property type="entry name" value="Cytochrome b"/>
    <property type="match status" value="1"/>
</dbReference>
<dbReference type="Gene3D" id="1.20.810.10">
    <property type="entry name" value="Cytochrome Bc1 Complex, Chain C"/>
    <property type="match status" value="1"/>
</dbReference>
<dbReference type="InterPro" id="IPR005798">
    <property type="entry name" value="Cyt_b/b6_C"/>
</dbReference>
<dbReference type="InterPro" id="IPR036150">
    <property type="entry name" value="Cyt_b/b6_C_sf"/>
</dbReference>
<dbReference type="InterPro" id="IPR005797">
    <property type="entry name" value="Cyt_b/b6_N"/>
</dbReference>
<dbReference type="InterPro" id="IPR027387">
    <property type="entry name" value="Cytb/b6-like_sf"/>
</dbReference>
<dbReference type="InterPro" id="IPR030689">
    <property type="entry name" value="Cytochrome_b"/>
</dbReference>
<dbReference type="InterPro" id="IPR048260">
    <property type="entry name" value="Cytochrome_b_C_euk/bac"/>
</dbReference>
<dbReference type="InterPro" id="IPR048259">
    <property type="entry name" value="Cytochrome_b_N_euk/bac"/>
</dbReference>
<dbReference type="InterPro" id="IPR016174">
    <property type="entry name" value="Di-haem_cyt_TM"/>
</dbReference>
<dbReference type="PANTHER" id="PTHR19271">
    <property type="entry name" value="CYTOCHROME B"/>
    <property type="match status" value="1"/>
</dbReference>
<dbReference type="PANTHER" id="PTHR19271:SF16">
    <property type="entry name" value="CYTOCHROME B"/>
    <property type="match status" value="1"/>
</dbReference>
<dbReference type="Pfam" id="PF00032">
    <property type="entry name" value="Cytochrom_B_C"/>
    <property type="match status" value="1"/>
</dbReference>
<dbReference type="Pfam" id="PF00033">
    <property type="entry name" value="Cytochrome_B"/>
    <property type="match status" value="1"/>
</dbReference>
<dbReference type="PIRSF" id="PIRSF038885">
    <property type="entry name" value="COB"/>
    <property type="match status" value="1"/>
</dbReference>
<dbReference type="SUPFAM" id="SSF81648">
    <property type="entry name" value="a domain/subunit of cytochrome bc1 complex (Ubiquinol-cytochrome c reductase)"/>
    <property type="match status" value="1"/>
</dbReference>
<dbReference type="SUPFAM" id="SSF81342">
    <property type="entry name" value="Transmembrane di-heme cytochromes"/>
    <property type="match status" value="1"/>
</dbReference>
<dbReference type="PROSITE" id="PS51003">
    <property type="entry name" value="CYTB_CTER"/>
    <property type="match status" value="1"/>
</dbReference>
<dbReference type="PROSITE" id="PS51002">
    <property type="entry name" value="CYTB_NTER"/>
    <property type="match status" value="1"/>
</dbReference>
<organism>
    <name type="scientific">Locusta migratoria</name>
    <name type="common">Migratory locust</name>
    <dbReference type="NCBI Taxonomy" id="7004"/>
    <lineage>
        <taxon>Eukaryota</taxon>
        <taxon>Metazoa</taxon>
        <taxon>Ecdysozoa</taxon>
        <taxon>Arthropoda</taxon>
        <taxon>Hexapoda</taxon>
        <taxon>Insecta</taxon>
        <taxon>Pterygota</taxon>
        <taxon>Neoptera</taxon>
        <taxon>Polyneoptera</taxon>
        <taxon>Orthoptera</taxon>
        <taxon>Caelifera</taxon>
        <taxon>Acrididea</taxon>
        <taxon>Acridomorpha</taxon>
        <taxon>Acridoidea</taxon>
        <taxon>Acrididae</taxon>
        <taxon>Oedipodinae</taxon>
        <taxon>Locusta</taxon>
    </lineage>
</organism>
<accession>Q36427</accession>